<evidence type="ECO:0000255" key="1">
    <source>
        <dbReference type="HAMAP-Rule" id="MF_00339"/>
    </source>
</evidence>
<comment type="function">
    <text evidence="1">Catalyzes the phosphorylation of D-fructose 6-phosphate to fructose 1,6-bisphosphate by ATP, the first committing step of glycolysis.</text>
</comment>
<comment type="catalytic activity">
    <reaction evidence="1">
        <text>beta-D-fructose 6-phosphate + ATP = beta-D-fructose 1,6-bisphosphate + ADP + H(+)</text>
        <dbReference type="Rhea" id="RHEA:16109"/>
        <dbReference type="ChEBI" id="CHEBI:15378"/>
        <dbReference type="ChEBI" id="CHEBI:30616"/>
        <dbReference type="ChEBI" id="CHEBI:32966"/>
        <dbReference type="ChEBI" id="CHEBI:57634"/>
        <dbReference type="ChEBI" id="CHEBI:456216"/>
        <dbReference type="EC" id="2.7.1.11"/>
    </reaction>
</comment>
<comment type="cofactor">
    <cofactor evidence="1">
        <name>Mg(2+)</name>
        <dbReference type="ChEBI" id="CHEBI:18420"/>
    </cofactor>
</comment>
<comment type="activity regulation">
    <text evidence="1">Allosterically activated by ADP and other diphosphonucleosides, and allosterically inhibited by phosphoenolpyruvate.</text>
</comment>
<comment type="pathway">
    <text evidence="1">Carbohydrate degradation; glycolysis; D-glyceraldehyde 3-phosphate and glycerone phosphate from D-glucose: step 3/4.</text>
</comment>
<comment type="subunit">
    <text evidence="1">Homotetramer.</text>
</comment>
<comment type="subcellular location">
    <subcellularLocation>
        <location evidence="1">Cytoplasm</location>
    </subcellularLocation>
</comment>
<comment type="similarity">
    <text evidence="1">Belongs to the phosphofructokinase type A (PFKA) family. ATP-dependent PFK group I subfamily. Prokaryotic clade 'B1' sub-subfamily.</text>
</comment>
<gene>
    <name evidence="1" type="primary">pfkA</name>
    <name type="ordered locus">SP70585_0935</name>
</gene>
<organism>
    <name type="scientific">Streptococcus pneumoniae (strain 70585)</name>
    <dbReference type="NCBI Taxonomy" id="488221"/>
    <lineage>
        <taxon>Bacteria</taxon>
        <taxon>Bacillati</taxon>
        <taxon>Bacillota</taxon>
        <taxon>Bacilli</taxon>
        <taxon>Lactobacillales</taxon>
        <taxon>Streptococcaceae</taxon>
        <taxon>Streptococcus</taxon>
    </lineage>
</organism>
<proteinExistence type="inferred from homology"/>
<feature type="chain" id="PRO_1000192381" description="ATP-dependent 6-phosphofructokinase">
    <location>
        <begin position="1"/>
        <end position="335"/>
    </location>
</feature>
<feature type="active site" description="Proton acceptor" evidence="1">
    <location>
        <position position="127"/>
    </location>
</feature>
<feature type="binding site" evidence="1">
    <location>
        <position position="11"/>
    </location>
    <ligand>
        <name>ATP</name>
        <dbReference type="ChEBI" id="CHEBI:30616"/>
    </ligand>
</feature>
<feature type="binding site" evidence="1">
    <location>
        <begin position="21"/>
        <end position="25"/>
    </location>
    <ligand>
        <name>ADP</name>
        <dbReference type="ChEBI" id="CHEBI:456216"/>
        <note>allosteric activator; ligand shared between dimeric partners</note>
    </ligand>
</feature>
<feature type="binding site" evidence="1">
    <location>
        <begin position="72"/>
        <end position="73"/>
    </location>
    <ligand>
        <name>ATP</name>
        <dbReference type="ChEBI" id="CHEBI:30616"/>
    </ligand>
</feature>
<feature type="binding site" evidence="1">
    <location>
        <begin position="102"/>
        <end position="105"/>
    </location>
    <ligand>
        <name>ATP</name>
        <dbReference type="ChEBI" id="CHEBI:30616"/>
    </ligand>
</feature>
<feature type="binding site" evidence="1">
    <location>
        <position position="103"/>
    </location>
    <ligand>
        <name>Mg(2+)</name>
        <dbReference type="ChEBI" id="CHEBI:18420"/>
        <note>catalytic</note>
    </ligand>
</feature>
<feature type="binding site" description="in other chain" evidence="1">
    <location>
        <begin position="125"/>
        <end position="127"/>
    </location>
    <ligand>
        <name>substrate</name>
        <note>ligand shared between dimeric partners</note>
    </ligand>
</feature>
<feature type="binding site" description="in other chain" evidence="1">
    <location>
        <position position="154"/>
    </location>
    <ligand>
        <name>ADP</name>
        <dbReference type="ChEBI" id="CHEBI:456216"/>
        <note>allosteric activator; ligand shared between dimeric partners</note>
    </ligand>
</feature>
<feature type="binding site" evidence="1">
    <location>
        <position position="162"/>
    </location>
    <ligand>
        <name>substrate</name>
        <note>ligand shared between dimeric partners</note>
    </ligand>
</feature>
<feature type="binding site" description="in other chain" evidence="1">
    <location>
        <begin position="169"/>
        <end position="171"/>
    </location>
    <ligand>
        <name>substrate</name>
        <note>ligand shared between dimeric partners</note>
    </ligand>
</feature>
<feature type="binding site" description="in other chain" evidence="1">
    <location>
        <begin position="185"/>
        <end position="187"/>
    </location>
    <ligand>
        <name>ADP</name>
        <dbReference type="ChEBI" id="CHEBI:456216"/>
        <note>allosteric activator; ligand shared between dimeric partners</note>
    </ligand>
</feature>
<feature type="binding site" description="in other chain" evidence="1">
    <location>
        <begin position="213"/>
        <end position="215"/>
    </location>
    <ligand>
        <name>ADP</name>
        <dbReference type="ChEBI" id="CHEBI:456216"/>
        <note>allosteric activator; ligand shared between dimeric partners</note>
    </ligand>
</feature>
<feature type="binding site" description="in other chain" evidence="1">
    <location>
        <position position="222"/>
    </location>
    <ligand>
        <name>substrate</name>
        <note>ligand shared between dimeric partners</note>
    </ligand>
</feature>
<feature type="binding site" evidence="1">
    <location>
        <position position="244"/>
    </location>
    <ligand>
        <name>substrate</name>
        <note>ligand shared between dimeric partners</note>
    </ligand>
</feature>
<feature type="binding site" description="in other chain" evidence="1">
    <location>
        <begin position="250"/>
        <end position="253"/>
    </location>
    <ligand>
        <name>substrate</name>
        <note>ligand shared between dimeric partners</note>
    </ligand>
</feature>
<name>PFKA_STRP7</name>
<accession>C1C6M8</accession>
<reference key="1">
    <citation type="journal article" date="2010" name="Genome Biol.">
        <title>Structure and dynamics of the pan-genome of Streptococcus pneumoniae and closely related species.</title>
        <authorList>
            <person name="Donati C."/>
            <person name="Hiller N.L."/>
            <person name="Tettelin H."/>
            <person name="Muzzi A."/>
            <person name="Croucher N.J."/>
            <person name="Angiuoli S.V."/>
            <person name="Oggioni M."/>
            <person name="Dunning Hotopp J.C."/>
            <person name="Hu F.Z."/>
            <person name="Riley D.R."/>
            <person name="Covacci A."/>
            <person name="Mitchell T.J."/>
            <person name="Bentley S.D."/>
            <person name="Kilian M."/>
            <person name="Ehrlich G.D."/>
            <person name="Rappuoli R."/>
            <person name="Moxon E.R."/>
            <person name="Masignani V."/>
        </authorList>
    </citation>
    <scope>NUCLEOTIDE SEQUENCE [LARGE SCALE GENOMIC DNA]</scope>
    <source>
        <strain>70585</strain>
    </source>
</reference>
<protein>
    <recommendedName>
        <fullName evidence="1">ATP-dependent 6-phosphofructokinase</fullName>
        <shortName evidence="1">ATP-PFK</shortName>
        <shortName evidence="1">Phosphofructokinase</shortName>
        <ecNumber evidence="1">2.7.1.11</ecNumber>
    </recommendedName>
    <alternativeName>
        <fullName evidence="1">Phosphohexokinase</fullName>
    </alternativeName>
</protein>
<dbReference type="EC" id="2.7.1.11" evidence="1"/>
<dbReference type="EMBL" id="CP000918">
    <property type="protein sequence ID" value="ACO17818.1"/>
    <property type="molecule type" value="Genomic_DNA"/>
</dbReference>
<dbReference type="RefSeq" id="WP_000820840.1">
    <property type="nucleotide sequence ID" value="NC_012468.1"/>
</dbReference>
<dbReference type="SMR" id="C1C6M8"/>
<dbReference type="KEGG" id="snm:SP70585_0935"/>
<dbReference type="HOGENOM" id="CLU_020655_0_1_9"/>
<dbReference type="UniPathway" id="UPA00109">
    <property type="reaction ID" value="UER00182"/>
</dbReference>
<dbReference type="Proteomes" id="UP000002211">
    <property type="component" value="Chromosome"/>
</dbReference>
<dbReference type="GO" id="GO:0005945">
    <property type="term" value="C:6-phosphofructokinase complex"/>
    <property type="evidence" value="ECO:0007669"/>
    <property type="project" value="TreeGrafter"/>
</dbReference>
<dbReference type="GO" id="GO:0003872">
    <property type="term" value="F:6-phosphofructokinase activity"/>
    <property type="evidence" value="ECO:0007669"/>
    <property type="project" value="UniProtKB-UniRule"/>
</dbReference>
<dbReference type="GO" id="GO:0016208">
    <property type="term" value="F:AMP binding"/>
    <property type="evidence" value="ECO:0007669"/>
    <property type="project" value="TreeGrafter"/>
</dbReference>
<dbReference type="GO" id="GO:0005524">
    <property type="term" value="F:ATP binding"/>
    <property type="evidence" value="ECO:0007669"/>
    <property type="project" value="UniProtKB-KW"/>
</dbReference>
<dbReference type="GO" id="GO:0070095">
    <property type="term" value="F:fructose-6-phosphate binding"/>
    <property type="evidence" value="ECO:0007669"/>
    <property type="project" value="TreeGrafter"/>
</dbReference>
<dbReference type="GO" id="GO:0042802">
    <property type="term" value="F:identical protein binding"/>
    <property type="evidence" value="ECO:0007669"/>
    <property type="project" value="TreeGrafter"/>
</dbReference>
<dbReference type="GO" id="GO:0046872">
    <property type="term" value="F:metal ion binding"/>
    <property type="evidence" value="ECO:0007669"/>
    <property type="project" value="UniProtKB-KW"/>
</dbReference>
<dbReference type="GO" id="GO:0048029">
    <property type="term" value="F:monosaccharide binding"/>
    <property type="evidence" value="ECO:0007669"/>
    <property type="project" value="TreeGrafter"/>
</dbReference>
<dbReference type="GO" id="GO:0061621">
    <property type="term" value="P:canonical glycolysis"/>
    <property type="evidence" value="ECO:0007669"/>
    <property type="project" value="TreeGrafter"/>
</dbReference>
<dbReference type="GO" id="GO:0030388">
    <property type="term" value="P:fructose 1,6-bisphosphate metabolic process"/>
    <property type="evidence" value="ECO:0007669"/>
    <property type="project" value="TreeGrafter"/>
</dbReference>
<dbReference type="GO" id="GO:0006002">
    <property type="term" value="P:fructose 6-phosphate metabolic process"/>
    <property type="evidence" value="ECO:0007669"/>
    <property type="project" value="InterPro"/>
</dbReference>
<dbReference type="CDD" id="cd00763">
    <property type="entry name" value="Bacterial_PFK"/>
    <property type="match status" value="1"/>
</dbReference>
<dbReference type="FunFam" id="3.40.50.450:FF:000001">
    <property type="entry name" value="ATP-dependent 6-phosphofructokinase"/>
    <property type="match status" value="1"/>
</dbReference>
<dbReference type="FunFam" id="3.40.50.460:FF:000002">
    <property type="entry name" value="ATP-dependent 6-phosphofructokinase"/>
    <property type="match status" value="1"/>
</dbReference>
<dbReference type="Gene3D" id="3.40.50.450">
    <property type="match status" value="1"/>
</dbReference>
<dbReference type="Gene3D" id="3.40.50.460">
    <property type="entry name" value="Phosphofructokinase domain"/>
    <property type="match status" value="1"/>
</dbReference>
<dbReference type="HAMAP" id="MF_00339">
    <property type="entry name" value="Phosphofructokinase_I_B1"/>
    <property type="match status" value="1"/>
</dbReference>
<dbReference type="InterPro" id="IPR022953">
    <property type="entry name" value="ATP_PFK"/>
</dbReference>
<dbReference type="InterPro" id="IPR012003">
    <property type="entry name" value="ATP_PFK_prok-type"/>
</dbReference>
<dbReference type="InterPro" id="IPR012828">
    <property type="entry name" value="PFKA_ATP_prok"/>
</dbReference>
<dbReference type="InterPro" id="IPR015912">
    <property type="entry name" value="Phosphofructokinase_CS"/>
</dbReference>
<dbReference type="InterPro" id="IPR000023">
    <property type="entry name" value="Phosphofructokinase_dom"/>
</dbReference>
<dbReference type="InterPro" id="IPR035966">
    <property type="entry name" value="PKF_sf"/>
</dbReference>
<dbReference type="NCBIfam" id="TIGR02482">
    <property type="entry name" value="PFKA_ATP"/>
    <property type="match status" value="1"/>
</dbReference>
<dbReference type="NCBIfam" id="NF002872">
    <property type="entry name" value="PRK03202.1"/>
    <property type="match status" value="1"/>
</dbReference>
<dbReference type="PANTHER" id="PTHR13697:SF4">
    <property type="entry name" value="ATP-DEPENDENT 6-PHOSPHOFRUCTOKINASE"/>
    <property type="match status" value="1"/>
</dbReference>
<dbReference type="PANTHER" id="PTHR13697">
    <property type="entry name" value="PHOSPHOFRUCTOKINASE"/>
    <property type="match status" value="1"/>
</dbReference>
<dbReference type="Pfam" id="PF00365">
    <property type="entry name" value="PFK"/>
    <property type="match status" value="1"/>
</dbReference>
<dbReference type="PIRSF" id="PIRSF000532">
    <property type="entry name" value="ATP_PFK_prok"/>
    <property type="match status" value="1"/>
</dbReference>
<dbReference type="PRINTS" id="PR00476">
    <property type="entry name" value="PHFRCTKINASE"/>
</dbReference>
<dbReference type="SUPFAM" id="SSF53784">
    <property type="entry name" value="Phosphofructokinase"/>
    <property type="match status" value="1"/>
</dbReference>
<dbReference type="PROSITE" id="PS00433">
    <property type="entry name" value="PHOSPHOFRUCTOKINASE"/>
    <property type="match status" value="1"/>
</dbReference>
<keyword id="KW-0021">Allosteric enzyme</keyword>
<keyword id="KW-0067">ATP-binding</keyword>
<keyword id="KW-0963">Cytoplasm</keyword>
<keyword id="KW-0324">Glycolysis</keyword>
<keyword id="KW-0418">Kinase</keyword>
<keyword id="KW-0460">Magnesium</keyword>
<keyword id="KW-0479">Metal-binding</keyword>
<keyword id="KW-0547">Nucleotide-binding</keyword>
<keyword id="KW-0808">Transferase</keyword>
<sequence length="335" mass="35232">MKRIAVLTSGGDAPGMNAAIRAVVRQAISEGMEVFGIYDGYAGMVAGEIHPLDAASVGDIISRGGTFLHSARYPEFAQLEGQLKGIEQLKKHGIEGVVVIGGDGSYHGAMRLTEHGFPAIGLPGTIDNDIVGTDFTIGFDTAVTTAMDAIDKIRDTSSSHRRTFVIEVMGRNAGDIALWAGIATGADEIIIPEADFKMEDIVASIKAGYECGKKHNIIVLAEGVMSAAEFGQKLKEAGDTSDLRVTELGHIQRGGSPTARDRVLASRMGAHAVKLLKEGIGGVAVGIRNEKMVENPILGTAEEGALFSLTAEGKIVVNNPHKADIELSSLNKSLS</sequence>